<protein>
    <recommendedName>
        <fullName>mRNA-decapping enzyme 1A</fullName>
        <ecNumber evidence="2">3.6.1.62</ecNumber>
    </recommendedName>
    <alternativeName>
        <fullName>Smad4-interacting transcriptional co-activator</fullName>
    </alternativeName>
    <alternativeName>
        <fullName>Transcription factor SMIF</fullName>
    </alternativeName>
</protein>
<keyword id="KW-0963">Cytoplasm</keyword>
<keyword id="KW-0378">Hydrolase</keyword>
<keyword id="KW-0488">Methylation</keyword>
<keyword id="KW-0866">Nonsense-mediated mRNA decay</keyword>
<keyword id="KW-0539">Nucleus</keyword>
<keyword id="KW-0597">Phosphoprotein</keyword>
<keyword id="KW-1185">Reference proteome</keyword>
<sequence>MESLSRAGQEMSLAALKQHDPYITSIADLTGQVALYTFCPKANQWEKTDIEGTLFVYRRSASPYHGFTIVNRLNMHNLVEPVNKDLEFQLHEPFLLYRNASLSIYSIWFYDKNDCHRIAKLMADVLEEETRRSQQAARDKQSPNQANGCSDHRPIDILEMLSRAKDEYERNQMGDSNISSPGLQPSTQISNLGSTETLEETPSGLQDKSALSGHKHLTVEELFGTSLPKEQPTVVGLESEEVEKLPGDASQKEPSSFLPFSFEPSGGGPQSENMGIRPAAHHSVQPEVTTPVLITPASITQSSEKQAPSYAIPLHPVLSPTLPAEASTAQAPPSLPRSTTMMQAVKTTPRQRSPLSSQPVPELSQASLAASQSPFRAPLNVTNTASTSLPSVDLLQKLRLTQQHDQIQTQSLGKGAVAPSFSPAAGQLATPESFIEPPPKTAAARASASLSNMVLAPLQSMQQNQDPEVFAQPKVLSSAIPVAGPALVTATTSAVSSVLLSPSVFQQTVTRSSDLERKASSPSPLTVGTSENQRKPSIILSKSQLQDTLIHLIKNDSSFLSTLHEVYLQVLTKNKDNHNL</sequence>
<organism>
    <name type="scientific">Sus scrofa</name>
    <name type="common">Pig</name>
    <dbReference type="NCBI Taxonomy" id="9823"/>
    <lineage>
        <taxon>Eukaryota</taxon>
        <taxon>Metazoa</taxon>
        <taxon>Chordata</taxon>
        <taxon>Craniata</taxon>
        <taxon>Vertebrata</taxon>
        <taxon>Euteleostomi</taxon>
        <taxon>Mammalia</taxon>
        <taxon>Eutheria</taxon>
        <taxon>Laurasiatheria</taxon>
        <taxon>Artiodactyla</taxon>
        <taxon>Suina</taxon>
        <taxon>Suidae</taxon>
        <taxon>Sus</taxon>
    </lineage>
</organism>
<evidence type="ECO:0000250" key="1">
    <source>
        <dbReference type="UniProtKB" id="Q91YD3"/>
    </source>
</evidence>
<evidence type="ECO:0000250" key="2">
    <source>
        <dbReference type="UniProtKB" id="Q9NPI6"/>
    </source>
</evidence>
<evidence type="ECO:0000256" key="3">
    <source>
        <dbReference type="SAM" id="MobiDB-lite"/>
    </source>
</evidence>
<evidence type="ECO:0000269" key="4">
    <source>
    </source>
</evidence>
<evidence type="ECO:0000305" key="5"/>
<accession>I3LHS8</accession>
<comment type="function">
    <text evidence="2">Necessary for the degradation of mRNAs, both in normal mRNA turnover and in nonsense-mediated mRNA decay. Removes the 7-methyl guanine cap structure from mRNA molecules, yielding a 5'-phosphorylated mRNA fragment and 7m-GDP. Contributes to the transactivation of target genes after stimulation by TGFB1 (By similarity). Essential for embryonic development (By similarity).</text>
</comment>
<comment type="catalytic activity">
    <reaction evidence="2">
        <text>a 5'-end (N(7)-methyl 5'-triphosphoguanosine)-ribonucleoside in mRNA + H2O = N(7)-methyl-GDP + a 5'-end phospho-ribonucleoside in mRNA + 2 H(+)</text>
        <dbReference type="Rhea" id="RHEA:67484"/>
        <dbReference type="Rhea" id="RHEA-COMP:15692"/>
        <dbReference type="Rhea" id="RHEA-COMP:17167"/>
        <dbReference type="ChEBI" id="CHEBI:15377"/>
        <dbReference type="ChEBI" id="CHEBI:15378"/>
        <dbReference type="ChEBI" id="CHEBI:63714"/>
        <dbReference type="ChEBI" id="CHEBI:138282"/>
        <dbReference type="ChEBI" id="CHEBI:156461"/>
        <dbReference type="EC" id="3.6.1.62"/>
    </reaction>
    <physiologicalReaction direction="left-to-right" evidence="2">
        <dbReference type="Rhea" id="RHEA:67485"/>
    </physiologicalReaction>
</comment>
<comment type="subunit">
    <text evidence="2">Forms a complex with EDC3, DCP2, DDX6 and EDC4/HEDLS, within this complex directly interacts with EDC3. Part of a cytoplasmic complex containing proteins involved in mRNA decay, including XRN1 and LSM1. Interacts with DCP1B. Interacts with DCP2. Interacts with DDX17 in an RNA-independent manner. Interacts with PNRC2. Interacts with SMAD4. Interacts with UPF1. Interacts with ZC3HAV1. Interacts with ZFP36L1. Interacts with NBDY. Interacts with DHX34; the interaction is RNA-independent (By similarity).</text>
</comment>
<comment type="subcellular location">
    <subcellularLocation>
        <location evidence="2">Cytoplasm</location>
        <location evidence="2">P-body</location>
    </subcellularLocation>
    <subcellularLocation>
        <location evidence="2">Nucleus</location>
    </subcellularLocation>
    <text evidence="1 2">Co-localizes with NANOS3 in the processing bodies (By similarity). Predominantly cytoplasmic, in processing bodies (PB). Nuclear, after TGFB1 treatment. Translocation to the nucleus depends on interaction with SMAD4 (By similarity).</text>
</comment>
<comment type="PTM">
    <text evidence="4">(Microbial infection) Cleaved by porcine reproductive and respiratory syndrome virus serine protease nsp4 after Glu-238. The cleavage inhibits DCP1A function.</text>
</comment>
<comment type="similarity">
    <text evidence="5">Belongs to the DCP1 family.</text>
</comment>
<name>DCP1A_PIG</name>
<reference key="1">
    <citation type="submission" date="2009-11" db="EMBL/GenBank/DDBJ databases">
        <authorList>
            <consortium name="Porcine genome sequencing project"/>
        </authorList>
    </citation>
    <scope>NUCLEOTIDE SEQUENCE [LARGE SCALE GENOMIC DNA]</scope>
</reference>
<reference key="2">
    <citation type="journal article" date="2018" name="J. Immunol.">
        <title>Porcine Reproductive and Respiratory Syndrome Virus Nonstructural Protein 4 Cleaves Porcine DCP1a To Attenuate Its Antiviral Activity.</title>
        <authorList>
            <person name="Tao R."/>
            <person name="Fang L."/>
            <person name="Bai D."/>
            <person name="Ke W."/>
            <person name="Zhou Y."/>
            <person name="Wang D."/>
            <person name="Xiao S."/>
        </authorList>
    </citation>
    <scope>CLEAVAGE BY PORCINE REPRODUCTIVE AND RESPIRATORY SYNDROME VIRUS SERINE PROTEASE NSP4 (MICROBIAL INFECTION)</scope>
</reference>
<gene>
    <name type="primary">DCP1A</name>
    <name type="synonym">SMIF</name>
</gene>
<proteinExistence type="evidence at protein level"/>
<feature type="chain" id="PRO_0000445605" description="mRNA-decapping enzyme 1A">
    <location>
        <begin position="1"/>
        <end position="580"/>
    </location>
</feature>
<feature type="region of interest" description="Disordered" evidence="3">
    <location>
        <begin position="132"/>
        <end position="154"/>
    </location>
</feature>
<feature type="region of interest" description="Disordered" evidence="3">
    <location>
        <begin position="172"/>
        <end position="209"/>
    </location>
</feature>
<feature type="region of interest" description="Disordered" evidence="3">
    <location>
        <begin position="245"/>
        <end position="276"/>
    </location>
</feature>
<feature type="region of interest" description="Disordered" evidence="3">
    <location>
        <begin position="343"/>
        <end position="371"/>
    </location>
</feature>
<feature type="region of interest" description="Disordered" evidence="3">
    <location>
        <begin position="510"/>
        <end position="533"/>
    </location>
</feature>
<feature type="compositionally biased region" description="Basic and acidic residues" evidence="3">
    <location>
        <begin position="132"/>
        <end position="141"/>
    </location>
</feature>
<feature type="compositionally biased region" description="Polar residues" evidence="3">
    <location>
        <begin position="173"/>
        <end position="196"/>
    </location>
</feature>
<feature type="compositionally biased region" description="Low complexity" evidence="3">
    <location>
        <begin position="253"/>
        <end position="264"/>
    </location>
</feature>
<feature type="compositionally biased region" description="Polar residues" evidence="3">
    <location>
        <begin position="343"/>
        <end position="359"/>
    </location>
</feature>
<feature type="compositionally biased region" description="Polar residues" evidence="3">
    <location>
        <begin position="520"/>
        <end position="531"/>
    </location>
</feature>
<feature type="site" description="(Microbial infection) Cleavage; by porcine reproductive and respiratory syndrome virus serine protease nsp4" evidence="4">
    <location>
        <begin position="238"/>
        <end position="239"/>
    </location>
</feature>
<feature type="modified residue" description="Phosphoserine" evidence="2">
    <location>
        <position position="62"/>
    </location>
</feature>
<feature type="modified residue" description="Phosphoserine" evidence="2">
    <location>
        <position position="142"/>
    </location>
</feature>
<feature type="modified residue" description="Phosphoserine" evidence="1">
    <location>
        <position position="179"/>
    </location>
</feature>
<feature type="modified residue" description="Phosphoserine" evidence="2">
    <location>
        <position position="180"/>
    </location>
</feature>
<feature type="modified residue" description="Phosphoserine" evidence="2">
    <location>
        <position position="319"/>
    </location>
</feature>
<feature type="modified residue" description="Phosphoserine" evidence="2">
    <location>
        <position position="334"/>
    </location>
</feature>
<feature type="modified residue" description="Phosphothreonine" evidence="2">
    <location>
        <position position="348"/>
    </location>
</feature>
<feature type="modified residue" description="Phosphoserine" evidence="2">
    <location>
        <position position="353"/>
    </location>
</feature>
<feature type="modified residue" description="Asymmetric dimethylarginine" evidence="2">
    <location>
        <position position="376"/>
    </location>
</feature>
<feature type="modified residue" description="Phosphothreonine" evidence="2">
    <location>
        <position position="401"/>
    </location>
</feature>
<feature type="modified residue" description="Phosphoserine" evidence="2">
    <location>
        <position position="422"/>
    </location>
</feature>
<feature type="modified residue" description="Phosphoserine" evidence="2">
    <location>
        <position position="520"/>
    </location>
</feature>
<feature type="modified residue" description="Phosphoserine" evidence="2">
    <location>
        <position position="521"/>
    </location>
</feature>
<feature type="modified residue" description="Phosphoserine" evidence="2">
    <location>
        <position position="523"/>
    </location>
</feature>
<feature type="modified residue" description="Phosphothreonine" evidence="1">
    <location>
        <position position="526"/>
    </location>
</feature>
<feature type="modified residue" description="Phosphothreonine" evidence="2">
    <location>
        <position position="529"/>
    </location>
</feature>
<dbReference type="EC" id="3.6.1.62" evidence="2"/>
<dbReference type="EMBL" id="AEMK02000086">
    <property type="status" value="NOT_ANNOTATED_CDS"/>
    <property type="molecule type" value="Genomic_DNA"/>
</dbReference>
<dbReference type="SMR" id="I3LHS8"/>
<dbReference type="FunCoup" id="I3LHS8">
    <property type="interactions" value="2404"/>
</dbReference>
<dbReference type="STRING" id="9823.ENSSSCP00000023625"/>
<dbReference type="PaxDb" id="9823-ENSSSCP00000023625"/>
<dbReference type="PeptideAtlas" id="I3LHS8"/>
<dbReference type="eggNOG" id="KOG2868">
    <property type="taxonomic scope" value="Eukaryota"/>
</dbReference>
<dbReference type="HOGENOM" id="CLU_030030_0_0_1"/>
<dbReference type="InParanoid" id="I3LHS8"/>
<dbReference type="OMA" id="SASRFKM"/>
<dbReference type="TreeFam" id="TF320504"/>
<dbReference type="Proteomes" id="UP000008227">
    <property type="component" value="Chromosome 13"/>
</dbReference>
<dbReference type="Proteomes" id="UP000314985">
    <property type="component" value="Unplaced"/>
</dbReference>
<dbReference type="Proteomes" id="UP000694570">
    <property type="component" value="Unplaced"/>
</dbReference>
<dbReference type="Proteomes" id="UP000694571">
    <property type="component" value="Unplaced"/>
</dbReference>
<dbReference type="Proteomes" id="UP000694720">
    <property type="component" value="Unplaced"/>
</dbReference>
<dbReference type="Proteomes" id="UP000694722">
    <property type="component" value="Unplaced"/>
</dbReference>
<dbReference type="Proteomes" id="UP000694723">
    <property type="component" value="Unplaced"/>
</dbReference>
<dbReference type="Proteomes" id="UP000694724">
    <property type="component" value="Unplaced"/>
</dbReference>
<dbReference type="Proteomes" id="UP000694725">
    <property type="component" value="Unplaced"/>
</dbReference>
<dbReference type="Proteomes" id="UP000694726">
    <property type="component" value="Unplaced"/>
</dbReference>
<dbReference type="Proteomes" id="UP000694727">
    <property type="component" value="Unplaced"/>
</dbReference>
<dbReference type="Proteomes" id="UP000694728">
    <property type="component" value="Unplaced"/>
</dbReference>
<dbReference type="Bgee" id="ENSSSCG00000022616">
    <property type="expression patterns" value="Expressed in stomach and 43 other cell types or tissues"/>
</dbReference>
<dbReference type="ExpressionAtlas" id="I3LHS8">
    <property type="expression patterns" value="baseline and differential"/>
</dbReference>
<dbReference type="GO" id="GO:0005634">
    <property type="term" value="C:nucleus"/>
    <property type="evidence" value="ECO:0007669"/>
    <property type="project" value="UniProtKB-SubCell"/>
</dbReference>
<dbReference type="GO" id="GO:0000932">
    <property type="term" value="C:P-body"/>
    <property type="evidence" value="ECO:0000318"/>
    <property type="project" value="GO_Central"/>
</dbReference>
<dbReference type="GO" id="GO:0140933">
    <property type="term" value="F:5'-(N(7)-methylguanosine 5'-triphospho)-[mRNA] hydrolase activity"/>
    <property type="evidence" value="ECO:0007669"/>
    <property type="project" value="RHEA"/>
</dbReference>
<dbReference type="GO" id="GO:0008047">
    <property type="term" value="F:enzyme activator activity"/>
    <property type="evidence" value="ECO:0007669"/>
    <property type="project" value="InterPro"/>
</dbReference>
<dbReference type="GO" id="GO:0003729">
    <property type="term" value="F:mRNA binding"/>
    <property type="evidence" value="ECO:0000318"/>
    <property type="project" value="GO_Central"/>
</dbReference>
<dbReference type="GO" id="GO:0000290">
    <property type="term" value="P:deadenylation-dependent decapping of nuclear-transcribed mRNA"/>
    <property type="evidence" value="ECO:0000318"/>
    <property type="project" value="GO_Central"/>
</dbReference>
<dbReference type="GO" id="GO:0031087">
    <property type="term" value="P:deadenylation-independent decapping of nuclear-transcribed mRNA"/>
    <property type="evidence" value="ECO:0000318"/>
    <property type="project" value="GO_Central"/>
</dbReference>
<dbReference type="GO" id="GO:0000184">
    <property type="term" value="P:nuclear-transcribed mRNA catabolic process, nonsense-mediated decay"/>
    <property type="evidence" value="ECO:0007669"/>
    <property type="project" value="UniProtKB-KW"/>
</dbReference>
<dbReference type="CDD" id="cd09804">
    <property type="entry name" value="Dcp1"/>
    <property type="match status" value="1"/>
</dbReference>
<dbReference type="FunFam" id="2.30.29.30:FF:000097">
    <property type="entry name" value="Putative mRNA-decapping enzyme 1A"/>
    <property type="match status" value="1"/>
</dbReference>
<dbReference type="Gene3D" id="6.10.140.2030">
    <property type="match status" value="1"/>
</dbReference>
<dbReference type="Gene3D" id="2.30.29.30">
    <property type="entry name" value="Pleckstrin-homology domain (PH domain)/Phosphotyrosine-binding domain (PTB)"/>
    <property type="match status" value="1"/>
</dbReference>
<dbReference type="InterPro" id="IPR010334">
    <property type="entry name" value="Dcp1"/>
</dbReference>
<dbReference type="InterPro" id="IPR031953">
    <property type="entry name" value="mRNA_decap_C"/>
</dbReference>
<dbReference type="InterPro" id="IPR011993">
    <property type="entry name" value="PH-like_dom_sf"/>
</dbReference>
<dbReference type="PANTHER" id="PTHR16290:SF4">
    <property type="entry name" value="MRNA-DECAPPING ENZYME 1A"/>
    <property type="match status" value="1"/>
</dbReference>
<dbReference type="PANTHER" id="PTHR16290">
    <property type="entry name" value="TRANSCRIPTION FACTOR SMIF DECAPPING ENZYME DCP1"/>
    <property type="match status" value="1"/>
</dbReference>
<dbReference type="Pfam" id="PF06058">
    <property type="entry name" value="DCP1"/>
    <property type="match status" value="1"/>
</dbReference>
<dbReference type="Pfam" id="PF16741">
    <property type="entry name" value="mRNA_decap_C"/>
    <property type="match status" value="1"/>
</dbReference>
<dbReference type="SUPFAM" id="SSF50729">
    <property type="entry name" value="PH domain-like"/>
    <property type="match status" value="1"/>
</dbReference>